<gene>
    <name type="primary">trp-1</name>
    <name type="synonym">trpg-trpc-trpf</name>
    <name type="synonym">tryp-1</name>
    <name type="ORF">NCU00200</name>
</gene>
<keyword id="KW-0028">Amino-acid biosynthesis</keyword>
<keyword id="KW-0057">Aromatic amino acid biosynthesis</keyword>
<keyword id="KW-0210">Decarboxylase</keyword>
<keyword id="KW-0315">Glutamine amidotransferase</keyword>
<keyword id="KW-0413">Isomerase</keyword>
<keyword id="KW-0456">Lyase</keyword>
<keyword id="KW-0511">Multifunctional enzyme</keyword>
<keyword id="KW-1185">Reference proteome</keyword>
<keyword id="KW-0822">Tryptophan biosynthesis</keyword>
<accession>P00908</accession>
<accession>Q7RV57</accession>
<accession>U9W354</accession>
<evidence type="ECO:0000250" key="1"/>
<evidence type="ECO:0000250" key="2">
    <source>
        <dbReference type="UniProtKB" id="P00900"/>
    </source>
</evidence>
<evidence type="ECO:0000305" key="3"/>
<proteinExistence type="inferred from homology"/>
<name>TRPG_NEUCR</name>
<protein>
    <recommendedName>
        <fullName>Multifunctional tryptophan biosynthesis protein</fullName>
    </recommendedName>
    <domain>
        <recommendedName>
            <fullName>Anthranilate synthase component 2</fullName>
            <shortName>AS</shortName>
            <ecNumber>4.1.3.27</ecNumber>
        </recommendedName>
        <alternativeName>
            <fullName>Anthranilate synthase, glutamine amidotransferase component</fullName>
        </alternativeName>
    </domain>
    <domain>
        <recommendedName>
            <fullName>Indole-3-glycerol phosphate synthase</fullName>
            <shortName>IGPS</shortName>
            <ecNumber>4.1.1.48</ecNumber>
        </recommendedName>
    </domain>
    <domain>
        <recommendedName>
            <fullName>N-(5'-phosphoribosyl)anthranilate isomerase</fullName>
            <shortName>PRAI</shortName>
            <ecNumber>5.3.1.24</ecNumber>
        </recommendedName>
    </domain>
</protein>
<organism>
    <name type="scientific">Neurospora crassa (strain ATCC 24698 / 74-OR23-1A / CBS 708.71 / DSM 1257 / FGSC 987)</name>
    <dbReference type="NCBI Taxonomy" id="367110"/>
    <lineage>
        <taxon>Eukaryota</taxon>
        <taxon>Fungi</taxon>
        <taxon>Dikarya</taxon>
        <taxon>Ascomycota</taxon>
        <taxon>Pezizomycotina</taxon>
        <taxon>Sordariomycetes</taxon>
        <taxon>Sordariomycetidae</taxon>
        <taxon>Sordariales</taxon>
        <taxon>Sordariaceae</taxon>
        <taxon>Neurospora</taxon>
    </lineage>
</organism>
<sequence>MSSSSVVDHSPHDSAPSPLVPTASNLILIDNYDSFTWNVYQYLVLEGAKVTVFRNDQITIDELIAKNPTQLVISPGPGHPGTDSGISRDAIRHFAGKIPIFGVCMGQQCIFDVYGGDVCFAGEILHGKTSPLRHDGKGAYAGLSQDLPVTRYHSLAGTHVTLPECLEVTSWIAKEDGSKGVIMGVRHKEYTIEGVQFHPESILSAEGRGMFRNFLHMQGGTWAENERLQKAAQAQAANTKSDAPTPKKSNILQKIYAHRKAAVDAQKQIPSLRPSDLQAAYNLSIAPPQISLVDRLRNSPFDVALCAEIKRASPSKGVFALDIDAPSQARKYALAGASVISVLTEPEWFKGSIDDLRAVRQVLNGMPNRPAVLRKEFIFDEYQILEARLAGADTVLLIVKMLEYELLERLYKYSLSLGMEPLVEVQNTEEMATAIKLGAKVIGVNNRNLESFEVDLGTTGRLRSMVPSDTFLCALSGINTHQDVLDCKRDGVNGILVGEAIMRAPDATQFIRELCAGLTGPVPKSAAEPLLVKICGTRSAEAAAEAIKAGADLVGMIMVPGTKRCVDHETALSISQAVHMSKKTGSTEVSSQASKSARDFFNINAEIIRKRGPLLVGVFMNQPLEEVLEKQHLYDLDIVQLHGDEPLEWANLIPVPVVRKFKPGQVGLATRGYHAVPLLDSGAGSGTLLDLESVKKELEKDEQVTVLLAGGLEPSNVVETVKSLGPLSERVIGVDVSSGVEEGGKQSLEKIREFVKAAKSVR</sequence>
<feature type="chain" id="PRO_0000056861" description="Multifunctional tryptophan biosynthesis protein">
    <location>
        <begin position="1"/>
        <end position="762"/>
    </location>
</feature>
<feature type="domain" description="Glutamine amidotransferase type-1">
    <location>
        <begin position="25"/>
        <end position="224"/>
    </location>
</feature>
<feature type="region of interest" description="Indole-3-glycerol phosphate synthase">
    <location>
        <begin position="251"/>
        <end position="515"/>
    </location>
</feature>
<feature type="region of interest" description="N-(5'-phosphoribosyl)anthranilate isomerase">
    <location>
        <begin position="531"/>
        <end position="762"/>
    </location>
</feature>
<feature type="active site" description="Nucleophile; for GATase activity" evidence="2">
    <location>
        <position position="104"/>
    </location>
</feature>
<feature type="active site" description="For GATase activity" evidence="1">
    <location>
        <position position="198"/>
    </location>
</feature>
<feature type="active site" description="For GATase activity" evidence="1">
    <location>
        <position position="200"/>
    </location>
</feature>
<feature type="binding site" evidence="2">
    <location>
        <begin position="76"/>
        <end position="78"/>
    </location>
    <ligand>
        <name>L-glutamine</name>
        <dbReference type="ChEBI" id="CHEBI:58359"/>
    </ligand>
</feature>
<feature type="binding site" evidence="2">
    <location>
        <position position="108"/>
    </location>
    <ligand>
        <name>L-glutamine</name>
        <dbReference type="ChEBI" id="CHEBI:58359"/>
    </ligand>
</feature>
<feature type="binding site" evidence="2">
    <location>
        <begin position="154"/>
        <end position="155"/>
    </location>
    <ligand>
        <name>L-glutamine</name>
        <dbReference type="ChEBI" id="CHEBI:58359"/>
    </ligand>
</feature>
<feature type="sequence conflict" description="In Ref. 1." evidence="3" ref="1">
    <original>A</original>
    <variation>G</variation>
    <location>
        <position position="337"/>
    </location>
</feature>
<feature type="sequence conflict" description="In Ref. 1." evidence="3" ref="1">
    <original>I</original>
    <variation>V</variation>
    <location>
        <position position="511"/>
    </location>
</feature>
<feature type="sequence conflict" description="In Ref. 1." evidence="3" ref="1">
    <original>P</original>
    <variation>S</variation>
    <location>
        <position position="523"/>
    </location>
</feature>
<comment type="function">
    <text>Trifunctional enzyme bearing the Gln amidotransferase (GATase) domain of anthranilate synthase, indole-glycerolphosphate synthase, and phosphoribosylanthranilate isomerase activities.</text>
</comment>
<comment type="catalytic activity">
    <reaction>
        <text>chorismate + L-glutamine = anthranilate + pyruvate + L-glutamate + H(+)</text>
        <dbReference type="Rhea" id="RHEA:21732"/>
        <dbReference type="ChEBI" id="CHEBI:15361"/>
        <dbReference type="ChEBI" id="CHEBI:15378"/>
        <dbReference type="ChEBI" id="CHEBI:16567"/>
        <dbReference type="ChEBI" id="CHEBI:29748"/>
        <dbReference type="ChEBI" id="CHEBI:29985"/>
        <dbReference type="ChEBI" id="CHEBI:58359"/>
        <dbReference type="EC" id="4.1.3.27"/>
    </reaction>
</comment>
<comment type="catalytic activity">
    <reaction>
        <text>N-(5-phospho-beta-D-ribosyl)anthranilate = 1-(2-carboxyphenylamino)-1-deoxy-D-ribulose 5-phosphate</text>
        <dbReference type="Rhea" id="RHEA:21540"/>
        <dbReference type="ChEBI" id="CHEBI:18277"/>
        <dbReference type="ChEBI" id="CHEBI:58613"/>
        <dbReference type="EC" id="5.3.1.24"/>
    </reaction>
</comment>
<comment type="catalytic activity">
    <reaction>
        <text>1-(2-carboxyphenylamino)-1-deoxy-D-ribulose 5-phosphate + H(+) = (1S,2R)-1-C-(indol-3-yl)glycerol 3-phosphate + CO2 + H2O</text>
        <dbReference type="Rhea" id="RHEA:23476"/>
        <dbReference type="ChEBI" id="CHEBI:15377"/>
        <dbReference type="ChEBI" id="CHEBI:15378"/>
        <dbReference type="ChEBI" id="CHEBI:16526"/>
        <dbReference type="ChEBI" id="CHEBI:58613"/>
        <dbReference type="ChEBI" id="CHEBI:58866"/>
        <dbReference type="EC" id="4.1.1.48"/>
    </reaction>
</comment>
<comment type="pathway">
    <text>Amino-acid biosynthesis; L-tryptophan biosynthesis; L-tryptophan from chorismate: step 1/5.</text>
</comment>
<comment type="pathway">
    <text>Amino-acid biosynthesis; L-tryptophan biosynthesis; L-tryptophan from chorismate: step 3/5.</text>
</comment>
<comment type="pathway">
    <text>Amino-acid biosynthesis; L-tryptophan biosynthesis; L-tryptophan from chorismate: step 4/5.</text>
</comment>
<comment type="subunit">
    <text>Tetramer of two components I and two components II.</text>
</comment>
<dbReference type="EC" id="4.1.3.27"/>
<dbReference type="EC" id="4.1.1.48"/>
<dbReference type="EC" id="5.3.1.24"/>
<dbReference type="EMBL" id="J01252">
    <property type="status" value="NOT_ANNOTATED_CDS"/>
    <property type="molecule type" value="Genomic_DNA"/>
</dbReference>
<dbReference type="EMBL" id="CM002238">
    <property type="protein sequence ID" value="ESA43300.1"/>
    <property type="molecule type" value="Genomic_DNA"/>
</dbReference>
<dbReference type="EMBL" id="CM002238">
    <property type="protein sequence ID" value="ESA43301.1"/>
    <property type="molecule type" value="Genomic_DNA"/>
</dbReference>
<dbReference type="PIR" id="A01130">
    <property type="entry name" value="NNNC2"/>
</dbReference>
<dbReference type="RefSeq" id="XP_011393782.1">
    <property type="nucleotide sequence ID" value="XM_011395480.1"/>
</dbReference>
<dbReference type="RefSeq" id="XP_011393783.1">
    <property type="nucleotide sequence ID" value="XM_011395481.1"/>
</dbReference>
<dbReference type="SMR" id="P00908"/>
<dbReference type="FunCoup" id="P00908">
    <property type="interactions" value="365"/>
</dbReference>
<dbReference type="STRING" id="367110.P00908"/>
<dbReference type="PaxDb" id="5141-EFNCRP00000000483"/>
<dbReference type="EnsemblFungi" id="ESA43300">
    <property type="protein sequence ID" value="ESA43300"/>
    <property type="gene ID" value="NCU00200"/>
</dbReference>
<dbReference type="EnsemblFungi" id="ESA43301">
    <property type="protein sequence ID" value="ESA43301"/>
    <property type="gene ID" value="NCU00200"/>
</dbReference>
<dbReference type="GeneID" id="3872732"/>
<dbReference type="KEGG" id="ncr:NCU00200"/>
<dbReference type="VEuPathDB" id="FungiDB:NCU00200"/>
<dbReference type="HOGENOM" id="CLU_007713_2_0_1"/>
<dbReference type="InParanoid" id="P00908"/>
<dbReference type="OrthoDB" id="524799at2759"/>
<dbReference type="UniPathway" id="UPA00035">
    <property type="reaction ID" value="UER00040"/>
</dbReference>
<dbReference type="UniPathway" id="UPA00035">
    <property type="reaction ID" value="UER00042"/>
</dbReference>
<dbReference type="UniPathway" id="UPA00035">
    <property type="reaction ID" value="UER00043"/>
</dbReference>
<dbReference type="Proteomes" id="UP000001805">
    <property type="component" value="Chromosome 3, Linkage Group III"/>
</dbReference>
<dbReference type="GO" id="GO:0004049">
    <property type="term" value="F:anthranilate synthase activity"/>
    <property type="evidence" value="ECO:0007669"/>
    <property type="project" value="UniProtKB-EC"/>
</dbReference>
<dbReference type="GO" id="GO:0004425">
    <property type="term" value="F:indole-3-glycerol-phosphate synthase activity"/>
    <property type="evidence" value="ECO:0007669"/>
    <property type="project" value="UniProtKB-EC"/>
</dbReference>
<dbReference type="GO" id="GO:0004640">
    <property type="term" value="F:phosphoribosylanthranilate isomerase activity"/>
    <property type="evidence" value="ECO:0007669"/>
    <property type="project" value="UniProtKB-EC"/>
</dbReference>
<dbReference type="GO" id="GO:0000162">
    <property type="term" value="P:L-tryptophan biosynthetic process"/>
    <property type="evidence" value="ECO:0000318"/>
    <property type="project" value="GO_Central"/>
</dbReference>
<dbReference type="CDD" id="cd01743">
    <property type="entry name" value="GATase1_Anthranilate_Synthase"/>
    <property type="match status" value="1"/>
</dbReference>
<dbReference type="CDD" id="cd00331">
    <property type="entry name" value="IGPS"/>
    <property type="match status" value="1"/>
</dbReference>
<dbReference type="CDD" id="cd00405">
    <property type="entry name" value="PRAI"/>
    <property type="match status" value="1"/>
</dbReference>
<dbReference type="FunFam" id="3.20.20.70:FF:000136">
    <property type="entry name" value="Multifunctional tryptophan biosynthesis protein"/>
    <property type="match status" value="1"/>
</dbReference>
<dbReference type="FunFam" id="3.40.50.880:FF:000031">
    <property type="entry name" value="Multifunctional tryptophan biosynthesis protein"/>
    <property type="match status" value="1"/>
</dbReference>
<dbReference type="Gene3D" id="3.40.50.880">
    <property type="match status" value="1"/>
</dbReference>
<dbReference type="Gene3D" id="3.20.20.70">
    <property type="entry name" value="Aldolase class I"/>
    <property type="match status" value="2"/>
</dbReference>
<dbReference type="HAMAP" id="MF_00135">
    <property type="entry name" value="PRAI"/>
    <property type="match status" value="1"/>
</dbReference>
<dbReference type="InterPro" id="IPR013785">
    <property type="entry name" value="Aldolase_TIM"/>
</dbReference>
<dbReference type="InterPro" id="IPR050472">
    <property type="entry name" value="Anth_synth/Amidotransfase"/>
</dbReference>
<dbReference type="InterPro" id="IPR016302">
    <property type="entry name" value="Anthranilate_synth_II"/>
</dbReference>
<dbReference type="InterPro" id="IPR029062">
    <property type="entry name" value="Class_I_gatase-like"/>
</dbReference>
<dbReference type="InterPro" id="IPR017926">
    <property type="entry name" value="GATASE"/>
</dbReference>
<dbReference type="InterPro" id="IPR013798">
    <property type="entry name" value="Indole-3-glycerol_P_synth_dom"/>
</dbReference>
<dbReference type="InterPro" id="IPR001468">
    <property type="entry name" value="Indole-3-GlycerolPSynthase_CS"/>
</dbReference>
<dbReference type="InterPro" id="IPR001240">
    <property type="entry name" value="PRAI_dom"/>
</dbReference>
<dbReference type="InterPro" id="IPR011060">
    <property type="entry name" value="RibuloseP-bd_barrel"/>
</dbReference>
<dbReference type="InterPro" id="IPR006221">
    <property type="entry name" value="TrpG/PapA_dom"/>
</dbReference>
<dbReference type="NCBIfam" id="TIGR00566">
    <property type="entry name" value="trpG_papA"/>
    <property type="match status" value="1"/>
</dbReference>
<dbReference type="PANTHER" id="PTHR43418:SF4">
    <property type="entry name" value="MULTIFUNCTIONAL TRYPTOPHAN BIOSYNTHESIS PROTEIN"/>
    <property type="match status" value="1"/>
</dbReference>
<dbReference type="PANTHER" id="PTHR43418">
    <property type="entry name" value="MULTIFUNCTIONAL TRYPTOPHAN BIOSYNTHESIS PROTEIN-RELATED"/>
    <property type="match status" value="1"/>
</dbReference>
<dbReference type="Pfam" id="PF00117">
    <property type="entry name" value="GATase"/>
    <property type="match status" value="1"/>
</dbReference>
<dbReference type="Pfam" id="PF00218">
    <property type="entry name" value="IGPS"/>
    <property type="match status" value="1"/>
</dbReference>
<dbReference type="Pfam" id="PF00697">
    <property type="entry name" value="PRAI"/>
    <property type="match status" value="1"/>
</dbReference>
<dbReference type="PIRSF" id="PIRSF001382">
    <property type="entry name" value="TrpG-trpC-trpF"/>
    <property type="match status" value="1"/>
</dbReference>
<dbReference type="PRINTS" id="PR00097">
    <property type="entry name" value="ANTSNTHASEII"/>
</dbReference>
<dbReference type="PRINTS" id="PR00096">
    <property type="entry name" value="GATASE"/>
</dbReference>
<dbReference type="SUPFAM" id="SSF52317">
    <property type="entry name" value="Class I glutamine amidotransferase-like"/>
    <property type="match status" value="1"/>
</dbReference>
<dbReference type="SUPFAM" id="SSF51366">
    <property type="entry name" value="Ribulose-phoshate binding barrel"/>
    <property type="match status" value="2"/>
</dbReference>
<dbReference type="PROSITE" id="PS51273">
    <property type="entry name" value="GATASE_TYPE_1"/>
    <property type="match status" value="1"/>
</dbReference>
<dbReference type="PROSITE" id="PS00614">
    <property type="entry name" value="IGPS"/>
    <property type="match status" value="1"/>
</dbReference>
<reference key="1">
    <citation type="journal article" date="1983" name="J. Mol. Appl. Genet.">
        <title>Structure of the trifunctional trp-1 gene from Neurospora crassa and its aberrant expression in Escherichia coli.</title>
        <authorList>
            <person name="Schechtman M.G."/>
            <person name="Yanofsky C."/>
        </authorList>
    </citation>
    <scope>NUCLEOTIDE SEQUENCE [GENOMIC DNA]</scope>
</reference>
<reference key="2">
    <citation type="journal article" date="2003" name="Nature">
        <title>The genome sequence of the filamentous fungus Neurospora crassa.</title>
        <authorList>
            <person name="Galagan J.E."/>
            <person name="Calvo S.E."/>
            <person name="Borkovich K.A."/>
            <person name="Selker E.U."/>
            <person name="Read N.D."/>
            <person name="Jaffe D.B."/>
            <person name="FitzHugh W."/>
            <person name="Ma L.-J."/>
            <person name="Smirnov S."/>
            <person name="Purcell S."/>
            <person name="Rehman B."/>
            <person name="Elkins T."/>
            <person name="Engels R."/>
            <person name="Wang S."/>
            <person name="Nielsen C.B."/>
            <person name="Butler J."/>
            <person name="Endrizzi M."/>
            <person name="Qui D."/>
            <person name="Ianakiev P."/>
            <person name="Bell-Pedersen D."/>
            <person name="Nelson M.A."/>
            <person name="Werner-Washburne M."/>
            <person name="Selitrennikoff C.P."/>
            <person name="Kinsey J.A."/>
            <person name="Braun E.L."/>
            <person name="Zelter A."/>
            <person name="Schulte U."/>
            <person name="Kothe G.O."/>
            <person name="Jedd G."/>
            <person name="Mewes H.-W."/>
            <person name="Staben C."/>
            <person name="Marcotte E."/>
            <person name="Greenberg D."/>
            <person name="Roy A."/>
            <person name="Foley K."/>
            <person name="Naylor J."/>
            <person name="Stange-Thomann N."/>
            <person name="Barrett R."/>
            <person name="Gnerre S."/>
            <person name="Kamal M."/>
            <person name="Kamvysselis M."/>
            <person name="Mauceli E.W."/>
            <person name="Bielke C."/>
            <person name="Rudd S."/>
            <person name="Frishman D."/>
            <person name="Krystofova S."/>
            <person name="Rasmussen C."/>
            <person name="Metzenberg R.L."/>
            <person name="Perkins D.D."/>
            <person name="Kroken S."/>
            <person name="Cogoni C."/>
            <person name="Macino G."/>
            <person name="Catcheside D.E.A."/>
            <person name="Li W."/>
            <person name="Pratt R.J."/>
            <person name="Osmani S.A."/>
            <person name="DeSouza C.P.C."/>
            <person name="Glass N.L."/>
            <person name="Orbach M.J."/>
            <person name="Berglund J.A."/>
            <person name="Voelker R."/>
            <person name="Yarden O."/>
            <person name="Plamann M."/>
            <person name="Seiler S."/>
            <person name="Dunlap J.C."/>
            <person name="Radford A."/>
            <person name="Aramayo R."/>
            <person name="Natvig D.O."/>
            <person name="Alex L.A."/>
            <person name="Mannhaupt G."/>
            <person name="Ebbole D.J."/>
            <person name="Freitag M."/>
            <person name="Paulsen I."/>
            <person name="Sachs M.S."/>
            <person name="Lander E.S."/>
            <person name="Nusbaum C."/>
            <person name="Birren B.W."/>
        </authorList>
    </citation>
    <scope>NUCLEOTIDE SEQUENCE [LARGE SCALE GENOMIC DNA]</scope>
    <source>
        <strain>ATCC 24698 / 74-OR23-1A / CBS 708.71 / DSM 1257 / FGSC 987</strain>
    </source>
</reference>